<dbReference type="EMBL" id="Y13569">
    <property type="protein sequence ID" value="CAA73903.1"/>
    <property type="molecule type" value="mRNA"/>
</dbReference>
<dbReference type="EMBL" id="CH466569">
    <property type="protein sequence ID" value="EDL28873.1"/>
    <property type="molecule type" value="Genomic_DNA"/>
</dbReference>
<dbReference type="EMBL" id="BC006796">
    <property type="protein sequence ID" value="AAH06796.1"/>
    <property type="molecule type" value="mRNA"/>
</dbReference>
<dbReference type="EMBL" id="BC085501">
    <property type="protein sequence ID" value="AAH85501.1"/>
    <property type="molecule type" value="mRNA"/>
</dbReference>
<dbReference type="CCDS" id="CCDS22381.1"/>
<dbReference type="RefSeq" id="NP_032867.2">
    <property type="nucleotide sequence ID" value="NM_008841.3"/>
</dbReference>
<dbReference type="PDB" id="2Y3A">
    <property type="method" value="X-ray"/>
    <property type="resolution" value="3.30 A"/>
    <property type="chains" value="B=423-722"/>
</dbReference>
<dbReference type="PDBsum" id="2Y3A"/>
<dbReference type="SMR" id="O08908"/>
<dbReference type="BioGRID" id="202163">
    <property type="interactions" value="36"/>
</dbReference>
<dbReference type="CORUM" id="O08908"/>
<dbReference type="FunCoup" id="O08908">
    <property type="interactions" value="2153"/>
</dbReference>
<dbReference type="IntAct" id="O08908">
    <property type="interactions" value="27"/>
</dbReference>
<dbReference type="STRING" id="10090.ENSMUSP00000034296"/>
<dbReference type="ChEMBL" id="CHEMBL4106167"/>
<dbReference type="iPTMnet" id="O08908"/>
<dbReference type="PhosphoSitePlus" id="O08908"/>
<dbReference type="jPOST" id="O08908"/>
<dbReference type="PaxDb" id="10090-ENSMUSP00000034296"/>
<dbReference type="PeptideAtlas" id="O08908"/>
<dbReference type="ProteomicsDB" id="294423"/>
<dbReference type="Pumba" id="O08908"/>
<dbReference type="DNASU" id="18709"/>
<dbReference type="Ensembl" id="ENSMUST00000034296.15">
    <property type="protein sequence ID" value="ENSMUSP00000034296.9"/>
    <property type="gene ID" value="ENSMUSG00000031834.16"/>
</dbReference>
<dbReference type="GeneID" id="18709"/>
<dbReference type="KEGG" id="mmu:18709"/>
<dbReference type="UCSC" id="uc009mbn.2">
    <property type="organism name" value="mouse"/>
</dbReference>
<dbReference type="AGR" id="MGI:1098772"/>
<dbReference type="CTD" id="5296"/>
<dbReference type="MGI" id="MGI:1098772">
    <property type="gene designation" value="Pik3r2"/>
</dbReference>
<dbReference type="VEuPathDB" id="HostDB:ENSMUSG00000031834"/>
<dbReference type="eggNOG" id="KOG4637">
    <property type="taxonomic scope" value="Eukaryota"/>
</dbReference>
<dbReference type="GeneTree" id="ENSGT00940000157050"/>
<dbReference type="HOGENOM" id="CLU_007031_1_0_1"/>
<dbReference type="InParanoid" id="O08908"/>
<dbReference type="OMA" id="SERCPQN"/>
<dbReference type="OrthoDB" id="3175255at2759"/>
<dbReference type="PhylomeDB" id="O08908"/>
<dbReference type="TreeFam" id="TF102033"/>
<dbReference type="Reactome" id="R-MMU-109704">
    <property type="pathway name" value="PI3K Cascade"/>
</dbReference>
<dbReference type="Reactome" id="R-MMU-112399">
    <property type="pathway name" value="IRS-mediated signalling"/>
</dbReference>
<dbReference type="Reactome" id="R-MMU-114604">
    <property type="pathway name" value="GPVI-mediated activation cascade"/>
</dbReference>
<dbReference type="Reactome" id="R-MMU-1257604">
    <property type="pathway name" value="PIP3 activates AKT signaling"/>
</dbReference>
<dbReference type="Reactome" id="R-MMU-1266695">
    <property type="pathway name" value="Interleukin-7 signaling"/>
</dbReference>
<dbReference type="Reactome" id="R-MMU-1433557">
    <property type="pathway name" value="Signaling by SCF-KIT"/>
</dbReference>
<dbReference type="Reactome" id="R-MMU-1660499">
    <property type="pathway name" value="Synthesis of PIPs at the plasma membrane"/>
</dbReference>
<dbReference type="Reactome" id="R-MMU-186763">
    <property type="pathway name" value="Downstream signal transduction"/>
</dbReference>
<dbReference type="Reactome" id="R-MMU-198203">
    <property type="pathway name" value="PI3K/AKT activation"/>
</dbReference>
<dbReference type="Reactome" id="R-MMU-201556">
    <property type="pathway name" value="Signaling by ALK"/>
</dbReference>
<dbReference type="Reactome" id="R-MMU-202424">
    <property type="pathway name" value="Downstream TCR signaling"/>
</dbReference>
<dbReference type="Reactome" id="R-MMU-2029485">
    <property type="pathway name" value="Role of phospholipids in phagocytosis"/>
</dbReference>
<dbReference type="Reactome" id="R-MMU-210993">
    <property type="pathway name" value="Tie2 Signaling"/>
</dbReference>
<dbReference type="Reactome" id="R-MMU-2424491">
    <property type="pathway name" value="DAP12 signaling"/>
</dbReference>
<dbReference type="Reactome" id="R-MMU-2730905">
    <property type="pathway name" value="Role of LAT2/NTAL/LAB on calcium mobilization"/>
</dbReference>
<dbReference type="Reactome" id="R-MMU-389357">
    <property type="pathway name" value="CD28 dependent PI3K/Akt signaling"/>
</dbReference>
<dbReference type="Reactome" id="R-MMU-416476">
    <property type="pathway name" value="G alpha (q) signalling events"/>
</dbReference>
<dbReference type="Reactome" id="R-MMU-4420097">
    <property type="pathway name" value="VEGFA-VEGFR2 Pathway"/>
</dbReference>
<dbReference type="Reactome" id="R-MMU-512988">
    <property type="pathway name" value="Interleukin-3, Interleukin-5 and GM-CSF signaling"/>
</dbReference>
<dbReference type="Reactome" id="R-MMU-5673001">
    <property type="pathway name" value="RAF/MAP kinase cascade"/>
</dbReference>
<dbReference type="Reactome" id="R-MMU-6811558">
    <property type="pathway name" value="PI5P, PP2A and IER3 Regulate PI3K/AKT Signaling"/>
</dbReference>
<dbReference type="Reactome" id="R-MMU-8853659">
    <property type="pathway name" value="RET signaling"/>
</dbReference>
<dbReference type="Reactome" id="R-MMU-8980692">
    <property type="pathway name" value="RHOA GTPase cycle"/>
</dbReference>
<dbReference type="Reactome" id="R-MMU-9009391">
    <property type="pathway name" value="Extra-nuclear estrogen signaling"/>
</dbReference>
<dbReference type="Reactome" id="R-MMU-9013026">
    <property type="pathway name" value="RHOB GTPase cycle"/>
</dbReference>
<dbReference type="Reactome" id="R-MMU-9013148">
    <property type="pathway name" value="CDC42 GTPase cycle"/>
</dbReference>
<dbReference type="Reactome" id="R-MMU-9013149">
    <property type="pathway name" value="RAC1 GTPase cycle"/>
</dbReference>
<dbReference type="Reactome" id="R-MMU-9013404">
    <property type="pathway name" value="RAC2 GTPase cycle"/>
</dbReference>
<dbReference type="Reactome" id="R-MMU-9013405">
    <property type="pathway name" value="RHOD GTPase cycle"/>
</dbReference>
<dbReference type="Reactome" id="R-MMU-9013409">
    <property type="pathway name" value="RHOJ GTPase cycle"/>
</dbReference>
<dbReference type="Reactome" id="R-MMU-9013420">
    <property type="pathway name" value="RHOU GTPase cycle"/>
</dbReference>
<dbReference type="Reactome" id="R-MMU-9013423">
    <property type="pathway name" value="RAC3 GTPase cycle"/>
</dbReference>
<dbReference type="Reactome" id="R-MMU-9035034">
    <property type="pathway name" value="RHOF GTPase cycle"/>
</dbReference>
<dbReference type="Reactome" id="R-MMU-912526">
    <property type="pathway name" value="Interleukin receptor SHC signaling"/>
</dbReference>
<dbReference type="Reactome" id="R-MMU-912631">
    <property type="pathway name" value="Regulation of signaling by CBL"/>
</dbReference>
<dbReference type="Reactome" id="R-MMU-9696264">
    <property type="pathway name" value="RND3 GTPase cycle"/>
</dbReference>
<dbReference type="Reactome" id="R-MMU-9696270">
    <property type="pathway name" value="RND2 GTPase cycle"/>
</dbReference>
<dbReference type="Reactome" id="R-MMU-9696273">
    <property type="pathway name" value="RND1 GTPase cycle"/>
</dbReference>
<dbReference type="Reactome" id="R-MMU-9842663">
    <property type="pathway name" value="Signaling by LTK"/>
</dbReference>
<dbReference type="Reactome" id="R-MMU-9927354">
    <property type="pathway name" value="Co-stimulation by ICOS"/>
</dbReference>
<dbReference type="BioGRID-ORCS" id="18709">
    <property type="hits" value="5 hits in 82 CRISPR screens"/>
</dbReference>
<dbReference type="ChiTaRS" id="Pik3r2">
    <property type="organism name" value="mouse"/>
</dbReference>
<dbReference type="EvolutionaryTrace" id="O08908"/>
<dbReference type="PRO" id="PR:O08908"/>
<dbReference type="Proteomes" id="UP000000589">
    <property type="component" value="Chromosome 8"/>
</dbReference>
<dbReference type="RNAct" id="O08908">
    <property type="molecule type" value="protein"/>
</dbReference>
<dbReference type="Bgee" id="ENSMUSG00000031834">
    <property type="expression patterns" value="Expressed in embryonic brain and 65 other cell types or tissues"/>
</dbReference>
<dbReference type="ExpressionAtlas" id="O08908">
    <property type="expression patterns" value="baseline and differential"/>
</dbReference>
<dbReference type="GO" id="GO:0005829">
    <property type="term" value="C:cytosol"/>
    <property type="evidence" value="ECO:0000304"/>
    <property type="project" value="Reactome"/>
</dbReference>
<dbReference type="GO" id="GO:0005925">
    <property type="term" value="C:focal adhesion"/>
    <property type="evidence" value="ECO:0000314"/>
    <property type="project" value="MGI"/>
</dbReference>
<dbReference type="GO" id="GO:0005634">
    <property type="term" value="C:nucleus"/>
    <property type="evidence" value="ECO:0000314"/>
    <property type="project" value="UniProtKB"/>
</dbReference>
<dbReference type="GO" id="GO:0005943">
    <property type="term" value="C:phosphatidylinositol 3-kinase complex, class IA"/>
    <property type="evidence" value="ECO:0007669"/>
    <property type="project" value="Ensembl"/>
</dbReference>
<dbReference type="GO" id="GO:0036312">
    <property type="term" value="F:phosphatidylinositol 3-kinase regulatory subunit binding"/>
    <property type="evidence" value="ECO:0000353"/>
    <property type="project" value="ParkinsonsUK-UCL"/>
</dbReference>
<dbReference type="GO" id="GO:0001784">
    <property type="term" value="F:phosphotyrosine residue binding"/>
    <property type="evidence" value="ECO:0007669"/>
    <property type="project" value="Ensembl"/>
</dbReference>
<dbReference type="GO" id="GO:0046982">
    <property type="term" value="F:protein heterodimerization activity"/>
    <property type="evidence" value="ECO:0000353"/>
    <property type="project" value="ParkinsonsUK-UCL"/>
</dbReference>
<dbReference type="GO" id="GO:0019903">
    <property type="term" value="F:protein phosphatase binding"/>
    <property type="evidence" value="ECO:0007669"/>
    <property type="project" value="Ensembl"/>
</dbReference>
<dbReference type="GO" id="GO:0030971">
    <property type="term" value="F:receptor tyrosine kinase binding"/>
    <property type="evidence" value="ECO:0007669"/>
    <property type="project" value="Ensembl"/>
</dbReference>
<dbReference type="GO" id="GO:0032869">
    <property type="term" value="P:cellular response to insulin stimulus"/>
    <property type="evidence" value="ECO:0000314"/>
    <property type="project" value="UniProtKB"/>
</dbReference>
<dbReference type="GO" id="GO:0008286">
    <property type="term" value="P:insulin receptor signaling pathway"/>
    <property type="evidence" value="ECO:0000315"/>
    <property type="project" value="ParkinsonsUK-UCL"/>
</dbReference>
<dbReference type="GO" id="GO:0001678">
    <property type="term" value="P:intracellular glucose homeostasis"/>
    <property type="evidence" value="ECO:0000314"/>
    <property type="project" value="UniProtKB"/>
</dbReference>
<dbReference type="GO" id="GO:0043409">
    <property type="term" value="P:negative regulation of MAPK cascade"/>
    <property type="evidence" value="ECO:0007669"/>
    <property type="project" value="Ensembl"/>
</dbReference>
<dbReference type="GO" id="GO:0043491">
    <property type="term" value="P:phosphatidylinositol 3-kinase/protein kinase B signal transduction"/>
    <property type="evidence" value="ECO:0000250"/>
    <property type="project" value="UniProtKB"/>
</dbReference>
<dbReference type="GO" id="GO:0045785">
    <property type="term" value="P:positive regulation of cell adhesion"/>
    <property type="evidence" value="ECO:0000314"/>
    <property type="project" value="MGI"/>
</dbReference>
<dbReference type="GO" id="GO:0042307">
    <property type="term" value="P:positive regulation of protein import into nucleus"/>
    <property type="evidence" value="ECO:0000315"/>
    <property type="project" value="UniProtKB"/>
</dbReference>
<dbReference type="GO" id="GO:0045944">
    <property type="term" value="P:positive regulation of transcription by RNA polymerase II"/>
    <property type="evidence" value="ECO:0000314"/>
    <property type="project" value="UniProtKB"/>
</dbReference>
<dbReference type="GO" id="GO:0015031">
    <property type="term" value="P:protein transport"/>
    <property type="evidence" value="ECO:0007669"/>
    <property type="project" value="UniProtKB-KW"/>
</dbReference>
<dbReference type="GO" id="GO:0030833">
    <property type="term" value="P:regulation of actin filament polymerization"/>
    <property type="evidence" value="ECO:0000315"/>
    <property type="project" value="MGI"/>
</dbReference>
<dbReference type="GO" id="GO:0010506">
    <property type="term" value="P:regulation of autophagy"/>
    <property type="evidence" value="ECO:0000250"/>
    <property type="project" value="UniProtKB"/>
</dbReference>
<dbReference type="GO" id="GO:1903076">
    <property type="term" value="P:regulation of protein localization to plasma membrane"/>
    <property type="evidence" value="ECO:0000314"/>
    <property type="project" value="MGI"/>
</dbReference>
<dbReference type="GO" id="GO:0051492">
    <property type="term" value="P:regulation of stress fiber assembly"/>
    <property type="evidence" value="ECO:0000315"/>
    <property type="project" value="MGI"/>
</dbReference>
<dbReference type="GO" id="GO:0034976">
    <property type="term" value="P:response to endoplasmic reticulum stress"/>
    <property type="evidence" value="ECO:0000314"/>
    <property type="project" value="UniProtKB"/>
</dbReference>
<dbReference type="CDD" id="cd12926">
    <property type="entry name" value="iSH2_PIK3R2"/>
    <property type="match status" value="1"/>
</dbReference>
<dbReference type="CDD" id="cd09930">
    <property type="entry name" value="SH2_cSH2_p85_like"/>
    <property type="match status" value="1"/>
</dbReference>
<dbReference type="CDD" id="cd09942">
    <property type="entry name" value="SH2_nSH2_p85_like"/>
    <property type="match status" value="1"/>
</dbReference>
<dbReference type="CDD" id="cd11909">
    <property type="entry name" value="SH3_PI3K_p85beta"/>
    <property type="match status" value="1"/>
</dbReference>
<dbReference type="DisProt" id="DP02791"/>
<dbReference type="FunFam" id="3.30.505.10:FF:000006">
    <property type="entry name" value="Phosphatidylinositol 3-kinase regulatory subunit alpha"/>
    <property type="match status" value="1"/>
</dbReference>
<dbReference type="FunFam" id="3.30.505.10:FF:000014">
    <property type="entry name" value="Phosphatidylinositol 3-kinase regulatory subunit alpha"/>
    <property type="match status" value="1"/>
</dbReference>
<dbReference type="FunFam" id="2.30.30.40:FF:000075">
    <property type="entry name" value="phosphatidylinositol 3-kinase regulatory subunit alpha"/>
    <property type="match status" value="1"/>
</dbReference>
<dbReference type="FunFam" id="1.10.555.10:FF:000037">
    <property type="entry name" value="Phosphatidylinositol 3-kinase regulatory subunit beta"/>
    <property type="match status" value="1"/>
</dbReference>
<dbReference type="FunFam" id="1.10.287.1490:FF:000001">
    <property type="entry name" value="Putative phosphatidylinositol 3-kinase regulatory subunit alpha"/>
    <property type="match status" value="1"/>
</dbReference>
<dbReference type="Gene3D" id="1.10.287.1490">
    <property type="match status" value="1"/>
</dbReference>
<dbReference type="Gene3D" id="1.10.555.10">
    <property type="entry name" value="Rho GTPase activation protein"/>
    <property type="match status" value="1"/>
</dbReference>
<dbReference type="Gene3D" id="3.30.505.10">
    <property type="entry name" value="SH2 domain"/>
    <property type="match status" value="2"/>
</dbReference>
<dbReference type="Gene3D" id="2.30.30.40">
    <property type="entry name" value="SH3 Domains"/>
    <property type="match status" value="1"/>
</dbReference>
<dbReference type="InterPro" id="IPR032498">
    <property type="entry name" value="PI3K_P85_iSH2"/>
</dbReference>
<dbReference type="InterPro" id="IPR035586">
    <property type="entry name" value="PI3K_p85beta_SH3"/>
</dbReference>
<dbReference type="InterPro" id="IPR035020">
    <property type="entry name" value="PI3kinase_P85_cSH2"/>
</dbReference>
<dbReference type="InterPro" id="IPR035022">
    <property type="entry name" value="PI3kinase_P85_nSH2"/>
</dbReference>
<dbReference type="InterPro" id="IPR008936">
    <property type="entry name" value="Rho_GTPase_activation_prot"/>
</dbReference>
<dbReference type="InterPro" id="IPR000198">
    <property type="entry name" value="RhoGAP_dom"/>
</dbReference>
<dbReference type="InterPro" id="IPR000980">
    <property type="entry name" value="SH2"/>
</dbReference>
<dbReference type="InterPro" id="IPR036860">
    <property type="entry name" value="SH2_dom_sf"/>
</dbReference>
<dbReference type="InterPro" id="IPR036028">
    <property type="entry name" value="SH3-like_dom_sf"/>
</dbReference>
<dbReference type="InterPro" id="IPR001452">
    <property type="entry name" value="SH3_domain"/>
</dbReference>
<dbReference type="PANTHER" id="PTHR10155">
    <property type="entry name" value="PHOSPHATIDYLINOSITOL 3-KINASE REGULATORY SUBUNIT"/>
    <property type="match status" value="1"/>
</dbReference>
<dbReference type="PANTHER" id="PTHR10155:SF1">
    <property type="entry name" value="PHOSPHATIDYLINOSITOL 3-KINASE REGULATORY SUBUNIT BETA"/>
    <property type="match status" value="1"/>
</dbReference>
<dbReference type="Pfam" id="PF16454">
    <property type="entry name" value="PI3K_P85_iSH2"/>
    <property type="match status" value="1"/>
</dbReference>
<dbReference type="Pfam" id="PF00620">
    <property type="entry name" value="RhoGAP"/>
    <property type="match status" value="1"/>
</dbReference>
<dbReference type="Pfam" id="PF00017">
    <property type="entry name" value="SH2"/>
    <property type="match status" value="2"/>
</dbReference>
<dbReference type="PRINTS" id="PR00678">
    <property type="entry name" value="PI3KINASEP85"/>
</dbReference>
<dbReference type="PRINTS" id="PR00401">
    <property type="entry name" value="SH2DOMAIN"/>
</dbReference>
<dbReference type="SMART" id="SM00324">
    <property type="entry name" value="RhoGAP"/>
    <property type="match status" value="1"/>
</dbReference>
<dbReference type="SMART" id="SM00252">
    <property type="entry name" value="SH2"/>
    <property type="match status" value="2"/>
</dbReference>
<dbReference type="SMART" id="SM00326">
    <property type="entry name" value="SH3"/>
    <property type="match status" value="1"/>
</dbReference>
<dbReference type="SUPFAM" id="SSF48350">
    <property type="entry name" value="GTPase activation domain, GAP"/>
    <property type="match status" value="1"/>
</dbReference>
<dbReference type="SUPFAM" id="SSF55550">
    <property type="entry name" value="SH2 domain"/>
    <property type="match status" value="2"/>
</dbReference>
<dbReference type="SUPFAM" id="SSF50044">
    <property type="entry name" value="SH3-domain"/>
    <property type="match status" value="1"/>
</dbReference>
<dbReference type="PROSITE" id="PS50238">
    <property type="entry name" value="RHOGAP"/>
    <property type="match status" value="1"/>
</dbReference>
<dbReference type="PROSITE" id="PS50001">
    <property type="entry name" value="SH2"/>
    <property type="match status" value="2"/>
</dbReference>
<dbReference type="PROSITE" id="PS50002">
    <property type="entry name" value="SH3"/>
    <property type="match status" value="1"/>
</dbReference>
<sequence length="722" mass="81266">MAGAEGFQYRAVYPFRRERPEDLELLPGDLLVVSRVALQALGVADGGERCPHNVGWMPGFNERTRQRGDFPGTYVEFLGPVALARPGPRPRGPRPLPARPLDGSSESGHILPDLAEQFSPPDPAPPILVKLVEAIEQAELDSECYSKPELPATRTDWSLSDLEQWDRTALYDAVKGFLLALPAAVVTPEAAAEAYRALREVAGPVGLVLEPPTLPLHQALTLRFLLQHLGRVARRAPSPDTAVHALASAFGPLLLRIPPSGGEGDGSEPVPDFPVLLLERLVQEHVEEQDAAPPALPPKPSKAKPAPTALANGGSPPSLQDAEWYWGDISREEVNERLRDTPDGTFLVRDASSKIQGEYTLTLRKGGNNKLIKVFHRDGHYGFSEPLTFCSVVELISHYRHESLAQYNAKLDTRLLYPVSKYQQDQVVKEDSIEAVGAQLKVYHQQYQDKSREYDQLYEEYTRTSQELQMKRTAIEAFNETIKIFEEQGQTQEKCSKEYLERFRREGNEKEMQRILLNSERLKSRIAEIHESRTKLEQDLRAQASDNREIDKRMNSLKPDLMQLRKIRDQYLVWLTQKGARQRKINEWLGIKNETEDQYSLMEDEDALPHHEERTWYVGKINRTQAEEMLSGKRDGTFLIRESSQRGCYACSVVVDGDTKHCVIYRTATGFGFAEPYNLYGSLKELVLHYQHASLVQHNDALTVTLAHPVRAPGPGPPSAAR</sequence>
<gene>
    <name type="primary">Pik3r2</name>
</gene>
<name>P85B_MOUSE</name>
<reference key="1">
    <citation type="journal article" date="1998" name="Oncogene">
        <title>An oncogenic fusion product of the phosphatidylinositol 3-kinase p85beta subunit and HUMORF8, a putative deubiquitinating enzyme.</title>
        <authorList>
            <person name="Janssen J.W.G."/>
            <person name="Schleithhoff L."/>
            <person name="Bartram C.R."/>
            <person name="Schulz A.S."/>
        </authorList>
    </citation>
    <scope>NUCLEOTIDE SEQUENCE [MRNA]</scope>
    <source>
        <strain>NIH Swiss</strain>
    </source>
</reference>
<reference key="2">
    <citation type="submission" date="2005-07" db="EMBL/GenBank/DDBJ databases">
        <authorList>
            <person name="Mural R.J."/>
            <person name="Adams M.D."/>
            <person name="Myers E.W."/>
            <person name="Smith H.O."/>
            <person name="Venter J.C."/>
        </authorList>
    </citation>
    <scope>NUCLEOTIDE SEQUENCE [LARGE SCALE GENOMIC DNA]</scope>
</reference>
<reference key="3">
    <citation type="journal article" date="2004" name="Genome Res.">
        <title>The status, quality, and expansion of the NIH full-length cDNA project: the Mammalian Gene Collection (MGC).</title>
        <authorList>
            <consortium name="The MGC Project Team"/>
        </authorList>
    </citation>
    <scope>NUCLEOTIDE SEQUENCE [LARGE SCALE MRNA]</scope>
    <source>
        <strain>C57BL/6J</strain>
        <strain>FVB/N</strain>
        <tissue>Brain</tissue>
        <tissue>Mammary gland</tissue>
    </source>
</reference>
<reference key="4">
    <citation type="journal article" date="2005" name="Nat. Biotechnol.">
        <title>Immunoaffinity profiling of tyrosine phosphorylation in cancer cells.</title>
        <authorList>
            <person name="Rush J."/>
            <person name="Moritz A."/>
            <person name="Lee K.A."/>
            <person name="Guo A."/>
            <person name="Goss V.L."/>
            <person name="Spek E.J."/>
            <person name="Zhang H."/>
            <person name="Zha X.-M."/>
            <person name="Polakiewicz R.D."/>
            <person name="Comb M.J."/>
        </authorList>
    </citation>
    <scope>PHOSPHORYLATION [LARGE SCALE ANALYSIS] AT TYR-458</scope>
    <scope>IDENTIFICATION BY MASS SPECTROMETRY [LARGE SCALE ANALYSIS]</scope>
</reference>
<reference key="5">
    <citation type="journal article" date="2006" name="Mol. Cell. Proteomics">
        <title>Comprehensive identification of phosphorylation sites in postsynaptic density preparations.</title>
        <authorList>
            <person name="Trinidad J.C."/>
            <person name="Specht C.G."/>
            <person name="Thalhammer A."/>
            <person name="Schoepfer R."/>
            <person name="Burlingame A.L."/>
        </authorList>
    </citation>
    <scope>IDENTIFICATION BY MASS SPECTROMETRY [LARGE SCALE ANALYSIS]</scope>
    <source>
        <tissue>Brain</tissue>
    </source>
</reference>
<reference key="6">
    <citation type="journal article" date="2007" name="J. Immunol.">
        <title>Quantitative time-resolved phosphoproteomic analysis of mast cell signaling.</title>
        <authorList>
            <person name="Cao L."/>
            <person name="Yu K."/>
            <person name="Banh C."/>
            <person name="Nguyen V."/>
            <person name="Ritz A."/>
            <person name="Raphael B.J."/>
            <person name="Kawakami Y."/>
            <person name="Kawakami T."/>
            <person name="Salomon A.R."/>
        </authorList>
    </citation>
    <scope>PHOSPHORYLATION [LARGE SCALE ANALYSIS] AT TYR-458</scope>
    <scope>IDENTIFICATION BY MASS SPECTROMETRY [LARGE SCALE ANALYSIS]</scope>
    <source>
        <tissue>Mast cell</tissue>
    </source>
</reference>
<reference key="7">
    <citation type="journal article" date="2008" name="J. Proteome Res.">
        <title>Large-scale identification and evolution indexing of tyrosine phosphorylation sites from murine brain.</title>
        <authorList>
            <person name="Ballif B.A."/>
            <person name="Carey G.R."/>
            <person name="Sunyaev S.R."/>
            <person name="Gygi S.P."/>
        </authorList>
    </citation>
    <scope>PHOSPHORYLATION [LARGE SCALE ANALYSIS] AT TYR-458</scope>
    <scope>IDENTIFICATION BY MASS SPECTROMETRY [LARGE SCALE ANALYSIS]</scope>
    <source>
        <tissue>Brain</tissue>
    </source>
</reference>
<reference key="8">
    <citation type="journal article" date="2010" name="Cell">
        <title>A tissue-specific atlas of mouse protein phosphorylation and expression.</title>
        <authorList>
            <person name="Huttlin E.L."/>
            <person name="Jedrychowski M.P."/>
            <person name="Elias J.E."/>
            <person name="Goswami T."/>
            <person name="Rad R."/>
            <person name="Beausoleil S.A."/>
            <person name="Villen J."/>
            <person name="Haas W."/>
            <person name="Sowa M.E."/>
            <person name="Gygi S.P."/>
        </authorList>
    </citation>
    <scope>IDENTIFICATION BY MASS SPECTROMETRY [LARGE SCALE ANALYSIS]</scope>
    <source>
        <tissue>Brain</tissue>
        <tissue>Spleen</tissue>
    </source>
</reference>
<reference key="9">
    <citation type="journal article" date="2010" name="Nat. Med.">
        <title>The regulatory subunits of PI3K, p85alpha and p85beta, interact with XBP-1 and increase its nuclear translocation.</title>
        <authorList>
            <person name="Park S.W."/>
            <person name="Zhou Y."/>
            <person name="Lee J."/>
            <person name="Lu A."/>
            <person name="Sun C."/>
            <person name="Chung J."/>
            <person name="Ueki K."/>
            <person name="Ozcan U."/>
        </authorList>
    </citation>
    <scope>FUNCTION</scope>
    <scope>INTERACTION WITH PIK3R1 AND XBP1</scope>
</reference>
<reference key="10">
    <citation type="journal article" date="2011" name="EMBO J.">
        <title>NYAP: a phosphoprotein family that links PI3K to WAVE1 signalling in neurons.</title>
        <authorList>
            <person name="Yokoyama K."/>
            <person name="Tezuka T."/>
            <person name="Kotani M."/>
            <person name="Nakazawa T."/>
            <person name="Hoshina N."/>
            <person name="Shimoda Y."/>
            <person name="Kakuta S."/>
            <person name="Sudo K."/>
            <person name="Watanabe K."/>
            <person name="Iwakura Y."/>
            <person name="Yamamoto T."/>
        </authorList>
    </citation>
    <scope>INTERACTION WITH NYAP1; NYAP2 AND MYO16</scope>
</reference>
<organism>
    <name type="scientific">Mus musculus</name>
    <name type="common">Mouse</name>
    <dbReference type="NCBI Taxonomy" id="10090"/>
    <lineage>
        <taxon>Eukaryota</taxon>
        <taxon>Metazoa</taxon>
        <taxon>Chordata</taxon>
        <taxon>Craniata</taxon>
        <taxon>Vertebrata</taxon>
        <taxon>Euteleostomi</taxon>
        <taxon>Mammalia</taxon>
        <taxon>Eutheria</taxon>
        <taxon>Euarchontoglires</taxon>
        <taxon>Glires</taxon>
        <taxon>Rodentia</taxon>
        <taxon>Myomorpha</taxon>
        <taxon>Muroidea</taxon>
        <taxon>Muridae</taxon>
        <taxon>Murinae</taxon>
        <taxon>Mus</taxon>
        <taxon>Mus</taxon>
    </lineage>
</organism>
<protein>
    <recommendedName>
        <fullName>Phosphatidylinositol 3-kinase regulatory subunit beta</fullName>
        <shortName>PI3-kinase regulatory subunit beta</shortName>
        <shortName>PI3K regulatory subunit beta</shortName>
        <shortName>PtdIns-3-kinase regulatory subunit beta</shortName>
    </recommendedName>
    <alternativeName>
        <fullName>Phosphatidylinositol 3-kinase 85 kDa regulatory subunit beta</fullName>
        <shortName>PI3-kinase subunit p85-beta</shortName>
        <shortName>PtdIns-3-kinase regulatory subunit p85-beta</shortName>
    </alternativeName>
</protein>
<evidence type="ECO:0000250" key="1">
    <source>
        <dbReference type="UniProtKB" id="O00459"/>
    </source>
</evidence>
<evidence type="ECO:0000255" key="2">
    <source>
        <dbReference type="PROSITE-ProRule" id="PRU00172"/>
    </source>
</evidence>
<evidence type="ECO:0000255" key="3">
    <source>
        <dbReference type="PROSITE-ProRule" id="PRU00191"/>
    </source>
</evidence>
<evidence type="ECO:0000255" key="4">
    <source>
        <dbReference type="PROSITE-ProRule" id="PRU00192"/>
    </source>
</evidence>
<evidence type="ECO:0000256" key="5">
    <source>
        <dbReference type="SAM" id="MobiDB-lite"/>
    </source>
</evidence>
<evidence type="ECO:0000269" key="6">
    <source>
    </source>
</evidence>
<evidence type="ECO:0000269" key="7">
    <source>
    </source>
</evidence>
<evidence type="ECO:0000305" key="8"/>
<evidence type="ECO:0007744" key="9">
    <source>
    </source>
</evidence>
<evidence type="ECO:0007744" key="10">
    <source>
    </source>
</evidence>
<evidence type="ECO:0007744" key="11">
    <source>
    </source>
</evidence>
<evidence type="ECO:0007829" key="12">
    <source>
        <dbReference type="PDB" id="2Y3A"/>
    </source>
</evidence>
<comment type="function">
    <text evidence="1 6">Regulatory subunit of phosphoinositide-3-kinase (PI3K), a kinase that phosphorylates PtdIns(4,5)P2 (Phosphatidylinositol 4,5-bisphosphate) to generate phosphatidylinositol 3,4,5-trisphosphate (PIP3). PIP3 plays a key role by recruiting PH domain-containing proteins to the membrane, including AKT1 and PDPK1, activating signaling cascades involved in cell growth, survival, proliferation, motility and morphology. Binds to activated (phosphorylated) protein-tyrosine kinases, through its SH2 domain, and acts as an adapter, mediating the association of the p110 catalytic unit to the plasma membrane. Indirectly regulates autophagy (By similarity). Promotes nuclear translocation of XBP1 isoform 2 in a ER stress- and/or insulin-dependent manner during metabolic overloading in the liver and hence plays a role in glucose tolerance improvement (PubMed:20348926).</text>
</comment>
<comment type="subunit">
    <text evidence="1 6 7">Heterodimer of a regulatory subunit PIK3R2 and a p110 catalytic subunit (PIK3CA, PIK3CB or PIK3CD). Interacts with AXL. Interacts with FLT1 (tyrosine-phosphorylated) and FLT4 (tyrosine-phosphorylated) (By similarity). Interacts with FBXL2; PIK3R2 is a substrate of the SCF(FBXL2) complex. Interacts with PTPN13; dephosphorylates PIK3R2 (By similarity). Interacts with NYAP1, NYAP2 and MYO16 (PubMed:21946561). Interacts with XBP1 isoform 2; the interaction is direct and induces translocation of XBP1 isoform 2 into the nucleus in a ER stress- and/or insulin-dependent but PI3K-independent manner (PubMed:20348926). Interacts with PIK3R1; the interaction is dissociated in an insulin-dependent manner (PubMed:20348926). Interacts with SRC (By similarity).</text>
</comment>
<comment type="interaction">
    <interactant intactId="EBI-643570">
        <id>O08908</id>
    </interactant>
    <interactant intactId="EBI-643930">
        <id>O88665</id>
        <label>Brd7</label>
    </interactant>
    <organismsDiffer>false</organismsDiffer>
    <experiments>4</experiments>
</comment>
<comment type="interaction">
    <interactant intactId="EBI-643570">
        <id>O08908</id>
    </interactant>
    <interactant intactId="EBI-643530">
        <id>Q9JK42</id>
        <label>Pdk2</label>
    </interactant>
    <organismsDiffer>false</organismsDiffer>
    <experiments>3</experiments>
</comment>
<comment type="domain">
    <text evidence="1">The SH2 2 domain is required for interaction with FBXL2 and PTPN13.</text>
</comment>
<comment type="PTM">
    <text evidence="1">Phosphorylated in response to signaling from activated receptor-type protein kinases. Dephosphorylated by PTPRJ. Dephosphorylated at Tyr-649 by PTPN13. Phosphorylation of Tyr-649 impairs while its dephosphorylation promotes interaction with FBXL2 and SCF(FBXL2)-mediated polyubiquitination.</text>
</comment>
<comment type="PTM">
    <text evidence="1">Ubiquitinated. Polyubiquitination by the SCF(FBXL2) complex probably promotes proteasomal degradation of PIK3R2.</text>
</comment>
<comment type="similarity">
    <text evidence="8">Belongs to the PI3K p85 subunit family.</text>
</comment>
<feature type="chain" id="PRO_0000080764" description="Phosphatidylinositol 3-kinase regulatory subunit beta">
    <location>
        <begin position="1"/>
        <end position="722"/>
    </location>
</feature>
<feature type="domain" description="SH3" evidence="4">
    <location>
        <begin position="4"/>
        <end position="80"/>
    </location>
</feature>
<feature type="domain" description="Rho-GAP" evidence="2">
    <location>
        <begin position="112"/>
        <end position="293"/>
    </location>
</feature>
<feature type="domain" description="SH2 1" evidence="3">
    <location>
        <begin position="324"/>
        <end position="419"/>
    </location>
</feature>
<feature type="domain" description="SH2 2" evidence="3">
    <location>
        <begin position="616"/>
        <end position="710"/>
    </location>
</feature>
<feature type="region of interest" description="Disordered" evidence="5">
    <location>
        <begin position="84"/>
        <end position="108"/>
    </location>
</feature>
<feature type="region of interest" description="Disordered" evidence="5">
    <location>
        <begin position="287"/>
        <end position="319"/>
    </location>
</feature>
<feature type="compositionally biased region" description="Pro residues" evidence="5">
    <location>
        <begin position="87"/>
        <end position="98"/>
    </location>
</feature>
<feature type="site" description="Arginine finger; crucial for GTP hydrolysis by stabilizing the transition state" evidence="2">
    <location>
        <position position="147"/>
    </location>
</feature>
<feature type="modified residue" description="Phosphotyrosine" evidence="9 10 11">
    <location>
        <position position="458"/>
    </location>
</feature>
<feature type="modified residue" description="Phosphotyrosine" evidence="1">
    <location>
        <position position="599"/>
    </location>
</feature>
<feature type="modified residue" description="Phosphotyrosine" evidence="1">
    <location>
        <position position="649"/>
    </location>
</feature>
<feature type="sequence conflict" description="In Ref. 1; CAA73903 and 3; AAH06796." evidence="8" ref="1 3">
    <original>I</original>
    <variation>V</variation>
    <location>
        <position position="433"/>
    </location>
</feature>
<feature type="helix" evidence="12">
    <location>
        <begin position="448"/>
        <end position="451"/>
    </location>
</feature>
<feature type="turn" evidence="12">
    <location>
        <begin position="452"/>
        <end position="454"/>
    </location>
</feature>
<feature type="helix" evidence="12">
    <location>
        <begin position="455"/>
        <end position="496"/>
    </location>
</feature>
<feature type="turn" evidence="12">
    <location>
        <begin position="508"/>
        <end position="510"/>
    </location>
</feature>
<feature type="helix" evidence="12">
    <location>
        <begin position="511"/>
        <end position="557"/>
    </location>
</feature>
<feature type="helix" evidence="12">
    <location>
        <begin position="559"/>
        <end position="568"/>
    </location>
</feature>
<feature type="helix" evidence="12">
    <location>
        <begin position="609"/>
        <end position="611"/>
    </location>
</feature>
<feature type="turn" evidence="12">
    <location>
        <begin position="614"/>
        <end position="616"/>
    </location>
</feature>
<feature type="helix" evidence="12">
    <location>
        <begin position="623"/>
        <end position="630"/>
    </location>
</feature>
<feature type="strand" evidence="12">
    <location>
        <begin position="637"/>
        <end position="640"/>
    </location>
</feature>
<feature type="strand" evidence="12">
    <location>
        <begin position="649"/>
        <end position="654"/>
    </location>
</feature>
<feature type="strand" evidence="12">
    <location>
        <begin position="656"/>
        <end position="667"/>
    </location>
</feature>
<feature type="strand" evidence="12">
    <location>
        <begin position="670"/>
        <end position="674"/>
    </location>
</feature>
<feature type="helix" evidence="12">
    <location>
        <begin position="683"/>
        <end position="688"/>
    </location>
</feature>
<feature type="strand" evidence="12">
    <location>
        <begin position="691"/>
        <end position="693"/>
    </location>
</feature>
<feature type="turn" evidence="12">
    <location>
        <begin position="696"/>
        <end position="698"/>
    </location>
</feature>
<keyword id="KW-0002">3D-structure</keyword>
<keyword id="KW-0597">Phosphoprotein</keyword>
<keyword id="KW-0653">Protein transport</keyword>
<keyword id="KW-1185">Reference proteome</keyword>
<keyword id="KW-0677">Repeat</keyword>
<keyword id="KW-0727">SH2 domain</keyword>
<keyword id="KW-0728">SH3 domain</keyword>
<keyword id="KW-0346">Stress response</keyword>
<keyword id="KW-0813">Transport</keyword>
<keyword id="KW-0832">Ubl conjugation</keyword>
<proteinExistence type="evidence at protein level"/>
<accession>O08908</accession>
<accession>Q5U3K7</accession>